<feature type="chain" id="PRO_1000194767" description="Adenylosuccinate synthetase">
    <location>
        <begin position="1"/>
        <end position="432"/>
    </location>
</feature>
<feature type="active site" description="Proton acceptor" evidence="1">
    <location>
        <position position="13"/>
    </location>
</feature>
<feature type="active site" description="Proton donor" evidence="1">
    <location>
        <position position="41"/>
    </location>
</feature>
<feature type="binding site" evidence="1">
    <location>
        <begin position="12"/>
        <end position="18"/>
    </location>
    <ligand>
        <name>GTP</name>
        <dbReference type="ChEBI" id="CHEBI:37565"/>
    </ligand>
</feature>
<feature type="binding site" description="in other chain" evidence="1">
    <location>
        <begin position="13"/>
        <end position="16"/>
    </location>
    <ligand>
        <name>IMP</name>
        <dbReference type="ChEBI" id="CHEBI:58053"/>
        <note>ligand shared between dimeric partners</note>
    </ligand>
</feature>
<feature type="binding site" evidence="1">
    <location>
        <position position="13"/>
    </location>
    <ligand>
        <name>Mg(2+)</name>
        <dbReference type="ChEBI" id="CHEBI:18420"/>
    </ligand>
</feature>
<feature type="binding site" description="in other chain" evidence="1">
    <location>
        <begin position="38"/>
        <end position="41"/>
    </location>
    <ligand>
        <name>IMP</name>
        <dbReference type="ChEBI" id="CHEBI:58053"/>
        <note>ligand shared between dimeric partners</note>
    </ligand>
</feature>
<feature type="binding site" evidence="1">
    <location>
        <begin position="40"/>
        <end position="42"/>
    </location>
    <ligand>
        <name>GTP</name>
        <dbReference type="ChEBI" id="CHEBI:37565"/>
    </ligand>
</feature>
<feature type="binding site" evidence="1">
    <location>
        <position position="40"/>
    </location>
    <ligand>
        <name>Mg(2+)</name>
        <dbReference type="ChEBI" id="CHEBI:18420"/>
    </ligand>
</feature>
<feature type="binding site" description="in other chain" evidence="1">
    <location>
        <position position="129"/>
    </location>
    <ligand>
        <name>IMP</name>
        <dbReference type="ChEBI" id="CHEBI:58053"/>
        <note>ligand shared between dimeric partners</note>
    </ligand>
</feature>
<feature type="binding site" evidence="1">
    <location>
        <position position="143"/>
    </location>
    <ligand>
        <name>IMP</name>
        <dbReference type="ChEBI" id="CHEBI:58053"/>
        <note>ligand shared between dimeric partners</note>
    </ligand>
</feature>
<feature type="binding site" description="in other chain" evidence="1">
    <location>
        <position position="224"/>
    </location>
    <ligand>
        <name>IMP</name>
        <dbReference type="ChEBI" id="CHEBI:58053"/>
        <note>ligand shared between dimeric partners</note>
    </ligand>
</feature>
<feature type="binding site" description="in other chain" evidence="1">
    <location>
        <position position="239"/>
    </location>
    <ligand>
        <name>IMP</name>
        <dbReference type="ChEBI" id="CHEBI:58053"/>
        <note>ligand shared between dimeric partners</note>
    </ligand>
</feature>
<feature type="binding site" evidence="1">
    <location>
        <begin position="299"/>
        <end position="305"/>
    </location>
    <ligand>
        <name>substrate</name>
    </ligand>
</feature>
<feature type="binding site" description="in other chain" evidence="1">
    <location>
        <position position="303"/>
    </location>
    <ligand>
        <name>IMP</name>
        <dbReference type="ChEBI" id="CHEBI:58053"/>
        <note>ligand shared between dimeric partners</note>
    </ligand>
</feature>
<feature type="binding site" evidence="1">
    <location>
        <position position="305"/>
    </location>
    <ligand>
        <name>GTP</name>
        <dbReference type="ChEBI" id="CHEBI:37565"/>
    </ligand>
</feature>
<feature type="binding site" evidence="1">
    <location>
        <begin position="331"/>
        <end position="333"/>
    </location>
    <ligand>
        <name>GTP</name>
        <dbReference type="ChEBI" id="CHEBI:37565"/>
    </ligand>
</feature>
<feature type="binding site" evidence="1">
    <location>
        <begin position="413"/>
        <end position="415"/>
    </location>
    <ligand>
        <name>GTP</name>
        <dbReference type="ChEBI" id="CHEBI:37565"/>
    </ligand>
</feature>
<reference key="1">
    <citation type="journal article" date="2009" name="Vaccine">
        <title>Whole genome sequence analysis of Mycobacterium bovis bacillus Calmette-Guerin (BCG) Tokyo 172: a comparative study of BCG vaccine substrains.</title>
        <authorList>
            <person name="Seki M."/>
            <person name="Honda I."/>
            <person name="Fujita I."/>
            <person name="Yano I."/>
            <person name="Yamamoto S."/>
            <person name="Koyama A."/>
        </authorList>
    </citation>
    <scope>NUCLEOTIDE SEQUENCE [LARGE SCALE GENOMIC DNA]</scope>
    <source>
        <strain>BCG / Tokyo 172 / ATCC 35737 / TMC 1019</strain>
    </source>
</reference>
<sequence length="432" mass="46823">MPAIVLIGAQWGDEGKGKATDLLGGRVQWVVRYQGGNNAGHTVVLPTGENFALHLIPSGVLTPGVTNVIGNGVVIDPGVLLNELRGLQDRGVDTAKLLISADAHLLMPYHIAIDKVTERYMGSKKIGTTGRGIGPCYQDKIARIGIRVADVLDPEQLTHKVEAACEFKNQVLVKIYNRKALDPAQVVDALLEQAEGFKHRIADTRLLLNAALEAGETVLLEGSQGTLLDVDHGTYPYVTSSNPTAGGAAVGSGIGPTRIGTVLGILKAYTTRVGSGPFPTELFDEHGEYLSKTGREFGVTTGRRRRCGWFDAVIARYAARVNGITDYFLTKLDVLSSLESVPVCVGYEIDGRRTRDMPMTQRDLCRAKPVYEELPGWWEDISGAREFDDLPAKARDYVLRLEQLAGAPVSCIGVGPGREQTIVRRDVLQDRP</sequence>
<evidence type="ECO:0000255" key="1">
    <source>
        <dbReference type="HAMAP-Rule" id="MF_00011"/>
    </source>
</evidence>
<gene>
    <name evidence="1" type="primary">purA</name>
    <name type="ordered locus">JTY_0365</name>
</gene>
<comment type="function">
    <text evidence="1">Plays an important role in the de novo pathway of purine nucleotide biosynthesis. Catalyzes the first committed step in the biosynthesis of AMP from IMP.</text>
</comment>
<comment type="catalytic activity">
    <reaction evidence="1">
        <text>IMP + L-aspartate + GTP = N(6)-(1,2-dicarboxyethyl)-AMP + GDP + phosphate + 2 H(+)</text>
        <dbReference type="Rhea" id="RHEA:15753"/>
        <dbReference type="ChEBI" id="CHEBI:15378"/>
        <dbReference type="ChEBI" id="CHEBI:29991"/>
        <dbReference type="ChEBI" id="CHEBI:37565"/>
        <dbReference type="ChEBI" id="CHEBI:43474"/>
        <dbReference type="ChEBI" id="CHEBI:57567"/>
        <dbReference type="ChEBI" id="CHEBI:58053"/>
        <dbReference type="ChEBI" id="CHEBI:58189"/>
        <dbReference type="EC" id="6.3.4.4"/>
    </reaction>
</comment>
<comment type="cofactor">
    <cofactor evidence="1">
        <name>Mg(2+)</name>
        <dbReference type="ChEBI" id="CHEBI:18420"/>
    </cofactor>
    <text evidence="1">Binds 1 Mg(2+) ion per subunit.</text>
</comment>
<comment type="pathway">
    <text evidence="1">Purine metabolism; AMP biosynthesis via de novo pathway; AMP from IMP: step 1/2.</text>
</comment>
<comment type="subunit">
    <text evidence="1">Homodimer.</text>
</comment>
<comment type="subcellular location">
    <subcellularLocation>
        <location evidence="1">Cytoplasm</location>
    </subcellularLocation>
</comment>
<comment type="similarity">
    <text evidence="1">Belongs to the adenylosuccinate synthetase family.</text>
</comment>
<dbReference type="EC" id="6.3.4.4" evidence="1"/>
<dbReference type="EMBL" id="AP010918">
    <property type="protein sequence ID" value="BAH24661.1"/>
    <property type="molecule type" value="Genomic_DNA"/>
</dbReference>
<dbReference type="RefSeq" id="WP_003401829.1">
    <property type="nucleotide sequence ID" value="NZ_CP014566.1"/>
</dbReference>
<dbReference type="SMR" id="C1AK32"/>
<dbReference type="KEGG" id="mbt:JTY_0365"/>
<dbReference type="HOGENOM" id="CLU_029848_0_0_11"/>
<dbReference type="UniPathway" id="UPA00075">
    <property type="reaction ID" value="UER00335"/>
</dbReference>
<dbReference type="GO" id="GO:0005737">
    <property type="term" value="C:cytoplasm"/>
    <property type="evidence" value="ECO:0007669"/>
    <property type="project" value="UniProtKB-SubCell"/>
</dbReference>
<dbReference type="GO" id="GO:0004019">
    <property type="term" value="F:adenylosuccinate synthase activity"/>
    <property type="evidence" value="ECO:0007669"/>
    <property type="project" value="UniProtKB-UniRule"/>
</dbReference>
<dbReference type="GO" id="GO:0005525">
    <property type="term" value="F:GTP binding"/>
    <property type="evidence" value="ECO:0007669"/>
    <property type="project" value="UniProtKB-UniRule"/>
</dbReference>
<dbReference type="GO" id="GO:0000287">
    <property type="term" value="F:magnesium ion binding"/>
    <property type="evidence" value="ECO:0007669"/>
    <property type="project" value="UniProtKB-UniRule"/>
</dbReference>
<dbReference type="GO" id="GO:0044208">
    <property type="term" value="P:'de novo' AMP biosynthetic process"/>
    <property type="evidence" value="ECO:0007669"/>
    <property type="project" value="UniProtKB-UniRule"/>
</dbReference>
<dbReference type="GO" id="GO:0046040">
    <property type="term" value="P:IMP metabolic process"/>
    <property type="evidence" value="ECO:0007669"/>
    <property type="project" value="TreeGrafter"/>
</dbReference>
<dbReference type="CDD" id="cd03108">
    <property type="entry name" value="AdSS"/>
    <property type="match status" value="1"/>
</dbReference>
<dbReference type="FunFam" id="1.10.300.10:FF:000001">
    <property type="entry name" value="Adenylosuccinate synthetase"/>
    <property type="match status" value="1"/>
</dbReference>
<dbReference type="FunFam" id="3.90.170.10:FF:000001">
    <property type="entry name" value="Adenylosuccinate synthetase"/>
    <property type="match status" value="1"/>
</dbReference>
<dbReference type="Gene3D" id="3.40.440.10">
    <property type="entry name" value="Adenylosuccinate Synthetase, subunit A, domain 1"/>
    <property type="match status" value="1"/>
</dbReference>
<dbReference type="Gene3D" id="1.10.300.10">
    <property type="entry name" value="Adenylosuccinate Synthetase, subunit A, domain 2"/>
    <property type="match status" value="1"/>
</dbReference>
<dbReference type="Gene3D" id="3.90.170.10">
    <property type="entry name" value="Adenylosuccinate Synthetase, subunit A, domain 3"/>
    <property type="match status" value="1"/>
</dbReference>
<dbReference type="HAMAP" id="MF_00011">
    <property type="entry name" value="Adenylosucc_synth"/>
    <property type="match status" value="1"/>
</dbReference>
<dbReference type="InterPro" id="IPR018220">
    <property type="entry name" value="Adenylosuccin_syn_GTP-bd"/>
</dbReference>
<dbReference type="InterPro" id="IPR033128">
    <property type="entry name" value="Adenylosuccin_syn_Lys_AS"/>
</dbReference>
<dbReference type="InterPro" id="IPR042109">
    <property type="entry name" value="Adenylosuccinate_synth_dom1"/>
</dbReference>
<dbReference type="InterPro" id="IPR042110">
    <property type="entry name" value="Adenylosuccinate_synth_dom2"/>
</dbReference>
<dbReference type="InterPro" id="IPR042111">
    <property type="entry name" value="Adenylosuccinate_synth_dom3"/>
</dbReference>
<dbReference type="InterPro" id="IPR001114">
    <property type="entry name" value="Adenylosuccinate_synthetase"/>
</dbReference>
<dbReference type="InterPro" id="IPR027417">
    <property type="entry name" value="P-loop_NTPase"/>
</dbReference>
<dbReference type="NCBIfam" id="NF002223">
    <property type="entry name" value="PRK01117.1"/>
    <property type="match status" value="1"/>
</dbReference>
<dbReference type="NCBIfam" id="TIGR00184">
    <property type="entry name" value="purA"/>
    <property type="match status" value="1"/>
</dbReference>
<dbReference type="PANTHER" id="PTHR11846">
    <property type="entry name" value="ADENYLOSUCCINATE SYNTHETASE"/>
    <property type="match status" value="1"/>
</dbReference>
<dbReference type="PANTHER" id="PTHR11846:SF0">
    <property type="entry name" value="ADENYLOSUCCINATE SYNTHETASE"/>
    <property type="match status" value="1"/>
</dbReference>
<dbReference type="Pfam" id="PF00709">
    <property type="entry name" value="Adenylsucc_synt"/>
    <property type="match status" value="1"/>
</dbReference>
<dbReference type="SMART" id="SM00788">
    <property type="entry name" value="Adenylsucc_synt"/>
    <property type="match status" value="1"/>
</dbReference>
<dbReference type="SUPFAM" id="SSF52540">
    <property type="entry name" value="P-loop containing nucleoside triphosphate hydrolases"/>
    <property type="match status" value="1"/>
</dbReference>
<dbReference type="PROSITE" id="PS01266">
    <property type="entry name" value="ADENYLOSUCCIN_SYN_1"/>
    <property type="match status" value="1"/>
</dbReference>
<dbReference type="PROSITE" id="PS00513">
    <property type="entry name" value="ADENYLOSUCCIN_SYN_2"/>
    <property type="match status" value="1"/>
</dbReference>
<organism>
    <name type="scientific">Mycobacterium bovis (strain BCG / Tokyo 172 / ATCC 35737 / TMC 1019)</name>
    <dbReference type="NCBI Taxonomy" id="561275"/>
    <lineage>
        <taxon>Bacteria</taxon>
        <taxon>Bacillati</taxon>
        <taxon>Actinomycetota</taxon>
        <taxon>Actinomycetes</taxon>
        <taxon>Mycobacteriales</taxon>
        <taxon>Mycobacteriaceae</taxon>
        <taxon>Mycobacterium</taxon>
        <taxon>Mycobacterium tuberculosis complex</taxon>
    </lineage>
</organism>
<proteinExistence type="inferred from homology"/>
<protein>
    <recommendedName>
        <fullName evidence="1">Adenylosuccinate synthetase</fullName>
        <shortName evidence="1">AMPSase</shortName>
        <shortName evidence="1">AdSS</shortName>
        <ecNumber evidence="1">6.3.4.4</ecNumber>
    </recommendedName>
    <alternativeName>
        <fullName evidence="1">IMP--aspartate ligase</fullName>
    </alternativeName>
</protein>
<name>PURA_MYCBT</name>
<keyword id="KW-0963">Cytoplasm</keyword>
<keyword id="KW-0342">GTP-binding</keyword>
<keyword id="KW-0436">Ligase</keyword>
<keyword id="KW-0460">Magnesium</keyword>
<keyword id="KW-0479">Metal-binding</keyword>
<keyword id="KW-0547">Nucleotide-binding</keyword>
<keyword id="KW-0658">Purine biosynthesis</keyword>
<accession>C1AK32</accession>